<comment type="function">
    <text evidence="1">Catalyzes the oxidation of glucose 6-phosphate to 6-phosphogluconolactone.</text>
</comment>
<comment type="catalytic activity">
    <reaction evidence="1">
        <text>D-glucose 6-phosphate + NADP(+) = 6-phospho-D-glucono-1,5-lactone + NADPH + H(+)</text>
        <dbReference type="Rhea" id="RHEA:15841"/>
        <dbReference type="ChEBI" id="CHEBI:15378"/>
        <dbReference type="ChEBI" id="CHEBI:57783"/>
        <dbReference type="ChEBI" id="CHEBI:57955"/>
        <dbReference type="ChEBI" id="CHEBI:58349"/>
        <dbReference type="ChEBI" id="CHEBI:61548"/>
        <dbReference type="EC" id="1.1.1.49"/>
    </reaction>
</comment>
<comment type="pathway">
    <text evidence="1">Carbohydrate degradation; pentose phosphate pathway; D-ribulose 5-phosphate from D-glucose 6-phosphate (oxidative stage): step 1/3.</text>
</comment>
<comment type="similarity">
    <text evidence="1">Belongs to the glucose-6-phosphate dehydrogenase family.</text>
</comment>
<reference key="1">
    <citation type="journal article" date="1998" name="Science">
        <title>Complete genome sequence of Treponema pallidum, the syphilis spirochete.</title>
        <authorList>
            <person name="Fraser C.M."/>
            <person name="Norris S.J."/>
            <person name="Weinstock G.M."/>
            <person name="White O."/>
            <person name="Sutton G.G."/>
            <person name="Dodson R.J."/>
            <person name="Gwinn M.L."/>
            <person name="Hickey E.K."/>
            <person name="Clayton R.A."/>
            <person name="Ketchum K.A."/>
            <person name="Sodergren E."/>
            <person name="Hardham J.M."/>
            <person name="McLeod M.P."/>
            <person name="Salzberg S.L."/>
            <person name="Peterson J.D."/>
            <person name="Khalak H.G."/>
            <person name="Richardson D.L."/>
            <person name="Howell J.K."/>
            <person name="Chidambaram M."/>
            <person name="Utterback T.R."/>
            <person name="McDonald L.A."/>
            <person name="Artiach P."/>
            <person name="Bowman C."/>
            <person name="Cotton M.D."/>
            <person name="Fujii C."/>
            <person name="Garland S.A."/>
            <person name="Hatch B."/>
            <person name="Horst K."/>
            <person name="Roberts K.M."/>
            <person name="Sandusky M."/>
            <person name="Weidman J.F."/>
            <person name="Smith H.O."/>
            <person name="Venter J.C."/>
        </authorList>
    </citation>
    <scope>NUCLEOTIDE SEQUENCE [LARGE SCALE GENOMIC DNA]</scope>
    <source>
        <strain>Nichols</strain>
    </source>
</reference>
<dbReference type="EC" id="1.1.1.49" evidence="1"/>
<dbReference type="EMBL" id="AE000520">
    <property type="protein sequence ID" value="AAC65465.1"/>
    <property type="molecule type" value="Genomic_DNA"/>
</dbReference>
<dbReference type="PIR" id="D71319">
    <property type="entry name" value="D71319"/>
</dbReference>
<dbReference type="RefSeq" id="WP_010881927.1">
    <property type="nucleotide sequence ID" value="NC_021490.2"/>
</dbReference>
<dbReference type="SMR" id="O83491"/>
<dbReference type="IntAct" id="O83491">
    <property type="interactions" value="1"/>
</dbReference>
<dbReference type="STRING" id="243276.TP_0478"/>
<dbReference type="EnsemblBacteria" id="AAC65465">
    <property type="protein sequence ID" value="AAC65465"/>
    <property type="gene ID" value="TP_0478"/>
</dbReference>
<dbReference type="GeneID" id="93876245"/>
<dbReference type="KEGG" id="tpa:TP_0478"/>
<dbReference type="KEGG" id="tpw:TPANIC_0478"/>
<dbReference type="eggNOG" id="COG0364">
    <property type="taxonomic scope" value="Bacteria"/>
</dbReference>
<dbReference type="HOGENOM" id="CLU_013524_5_0_12"/>
<dbReference type="OrthoDB" id="9802739at2"/>
<dbReference type="UniPathway" id="UPA00115">
    <property type="reaction ID" value="UER00408"/>
</dbReference>
<dbReference type="Proteomes" id="UP000000811">
    <property type="component" value="Chromosome"/>
</dbReference>
<dbReference type="GO" id="GO:0005829">
    <property type="term" value="C:cytosol"/>
    <property type="evidence" value="ECO:0007669"/>
    <property type="project" value="TreeGrafter"/>
</dbReference>
<dbReference type="GO" id="GO:0004345">
    <property type="term" value="F:glucose-6-phosphate dehydrogenase activity"/>
    <property type="evidence" value="ECO:0007669"/>
    <property type="project" value="UniProtKB-UniRule"/>
</dbReference>
<dbReference type="GO" id="GO:0050661">
    <property type="term" value="F:NADP binding"/>
    <property type="evidence" value="ECO:0007669"/>
    <property type="project" value="UniProtKB-UniRule"/>
</dbReference>
<dbReference type="GO" id="GO:0006006">
    <property type="term" value="P:glucose metabolic process"/>
    <property type="evidence" value="ECO:0007669"/>
    <property type="project" value="UniProtKB-KW"/>
</dbReference>
<dbReference type="GO" id="GO:0009051">
    <property type="term" value="P:pentose-phosphate shunt, oxidative branch"/>
    <property type="evidence" value="ECO:0007669"/>
    <property type="project" value="TreeGrafter"/>
</dbReference>
<dbReference type="Gene3D" id="3.30.360.10">
    <property type="entry name" value="Dihydrodipicolinate Reductase, domain 2"/>
    <property type="match status" value="1"/>
</dbReference>
<dbReference type="Gene3D" id="3.40.50.720">
    <property type="entry name" value="NAD(P)-binding Rossmann-like Domain"/>
    <property type="match status" value="1"/>
</dbReference>
<dbReference type="HAMAP" id="MF_00966">
    <property type="entry name" value="G6PD"/>
    <property type="match status" value="1"/>
</dbReference>
<dbReference type="InterPro" id="IPR001282">
    <property type="entry name" value="G6P_DH"/>
</dbReference>
<dbReference type="InterPro" id="IPR019796">
    <property type="entry name" value="G6P_DH_AS"/>
</dbReference>
<dbReference type="InterPro" id="IPR022675">
    <property type="entry name" value="G6P_DH_C"/>
</dbReference>
<dbReference type="InterPro" id="IPR022674">
    <property type="entry name" value="G6P_DH_NAD-bd"/>
</dbReference>
<dbReference type="InterPro" id="IPR036291">
    <property type="entry name" value="NAD(P)-bd_dom_sf"/>
</dbReference>
<dbReference type="NCBIfam" id="TIGR00871">
    <property type="entry name" value="zwf"/>
    <property type="match status" value="1"/>
</dbReference>
<dbReference type="PANTHER" id="PTHR23429:SF0">
    <property type="entry name" value="GLUCOSE-6-PHOSPHATE 1-DEHYDROGENASE"/>
    <property type="match status" value="1"/>
</dbReference>
<dbReference type="PANTHER" id="PTHR23429">
    <property type="entry name" value="GLUCOSE-6-PHOSPHATE 1-DEHYDROGENASE G6PD"/>
    <property type="match status" value="1"/>
</dbReference>
<dbReference type="Pfam" id="PF02781">
    <property type="entry name" value="G6PD_C"/>
    <property type="match status" value="1"/>
</dbReference>
<dbReference type="Pfam" id="PF00479">
    <property type="entry name" value="G6PD_N"/>
    <property type="match status" value="1"/>
</dbReference>
<dbReference type="PIRSF" id="PIRSF000110">
    <property type="entry name" value="G6PD"/>
    <property type="match status" value="1"/>
</dbReference>
<dbReference type="PRINTS" id="PR00079">
    <property type="entry name" value="G6PDHDRGNASE"/>
</dbReference>
<dbReference type="SUPFAM" id="SSF55347">
    <property type="entry name" value="Glyceraldehyde-3-phosphate dehydrogenase-like, C-terminal domain"/>
    <property type="match status" value="1"/>
</dbReference>
<dbReference type="SUPFAM" id="SSF51735">
    <property type="entry name" value="NAD(P)-binding Rossmann-fold domains"/>
    <property type="match status" value="1"/>
</dbReference>
<dbReference type="PROSITE" id="PS00069">
    <property type="entry name" value="G6P_DEHYDROGENASE"/>
    <property type="match status" value="1"/>
</dbReference>
<proteinExistence type="inferred from homology"/>
<feature type="chain" id="PRO_0000068137" description="Glucose-6-phosphate 1-dehydrogenase">
    <location>
        <begin position="1"/>
        <end position="515"/>
    </location>
</feature>
<feature type="active site" description="Proton acceptor" evidence="1">
    <location>
        <position position="252"/>
    </location>
</feature>
<feature type="binding site" evidence="1">
    <location>
        <position position="53"/>
    </location>
    <ligand>
        <name>NADP(+)</name>
        <dbReference type="ChEBI" id="CHEBI:58349"/>
    </ligand>
</feature>
<feature type="binding site" evidence="1">
    <location>
        <position position="160"/>
    </location>
    <ligand>
        <name>NADP(+)</name>
        <dbReference type="ChEBI" id="CHEBI:58349"/>
    </ligand>
</feature>
<feature type="binding site" evidence="1">
    <location>
        <position position="190"/>
    </location>
    <ligand>
        <name>substrate</name>
    </ligand>
</feature>
<feature type="binding site" evidence="1">
    <location>
        <position position="194"/>
    </location>
    <ligand>
        <name>substrate</name>
    </ligand>
</feature>
<feature type="binding site" evidence="1">
    <location>
        <position position="228"/>
    </location>
    <ligand>
        <name>substrate</name>
    </ligand>
</feature>
<feature type="binding site" evidence="1">
    <location>
        <position position="247"/>
    </location>
    <ligand>
        <name>substrate</name>
    </ligand>
</feature>
<feature type="binding site" evidence="1">
    <location>
        <position position="352"/>
    </location>
    <ligand>
        <name>substrate</name>
    </ligand>
</feature>
<name>G6PD_TREPA</name>
<organism>
    <name type="scientific">Treponema pallidum (strain Nichols)</name>
    <dbReference type="NCBI Taxonomy" id="243276"/>
    <lineage>
        <taxon>Bacteria</taxon>
        <taxon>Pseudomonadati</taxon>
        <taxon>Spirochaetota</taxon>
        <taxon>Spirochaetia</taxon>
        <taxon>Spirochaetales</taxon>
        <taxon>Treponemataceae</taxon>
        <taxon>Treponema</taxon>
    </lineage>
</organism>
<gene>
    <name evidence="1" type="primary">zwf</name>
    <name type="ordered locus">TP_0478</name>
</gene>
<sequence>MGKISGSGTVAPHILVIFGASGDLAARKLIPSLWDLFEQELLPRTFGILGAGRTALSTESFRARLAEAVTKHAVRTPHDPARLTEFLQKIHYFSFDPTDSVAFADFATYVRTLDQSLHTEGNFIFYLATPPSLYETIPTQLAMHHLNREQGNFRRVVIEKPFGYNLETAQHLNASLRAHFQENQTYRIDHYLGKETVQNILVTRFANPLFEPTWNRTHIDYVEITASESLGVENRGGYYDQSGALRDMIQNHLLLLLGIIAMEAPAVVSSSRLRDEIVKVFDCLRPMGERDVMQHTVRAQYVAGKIRGVAVPGYLEESGVDPRSCTETFAALKCYIDNWRWMDVPFYLRTGKRLPTGVTEVIVHYRTLPIALFEHIERPCAREGNALVIRIQPDEGIQLKIDLKEPGAGFKTIPVSVDFQYSALTYSHLPSAYERLLLDCMNGDNTLYHRDDAVESAWRFIDPILAAWKSNKSPLLTYPAGSWGPKAADDLIKGSAPRWHHPSSTLLSDDFACRL</sequence>
<evidence type="ECO:0000255" key="1">
    <source>
        <dbReference type="HAMAP-Rule" id="MF_00966"/>
    </source>
</evidence>
<protein>
    <recommendedName>
        <fullName evidence="1">Glucose-6-phosphate 1-dehydrogenase</fullName>
        <shortName evidence="1">G6PD</shortName>
        <ecNumber evidence="1">1.1.1.49</ecNumber>
    </recommendedName>
</protein>
<accession>O83491</accession>
<keyword id="KW-0119">Carbohydrate metabolism</keyword>
<keyword id="KW-0313">Glucose metabolism</keyword>
<keyword id="KW-0521">NADP</keyword>
<keyword id="KW-0560">Oxidoreductase</keyword>
<keyword id="KW-1185">Reference proteome</keyword>